<reference key="1">
    <citation type="journal article" date="1992" name="J. Neurosci.">
        <title>The G-protein-coupled receptor kinases beta ARK1 and beta ARK2 are widely distributed at synapses in rat brain.</title>
        <authorList>
            <person name="Arriza J.L."/>
            <person name="Dawson T.M."/>
            <person name="Simerly R.B."/>
            <person name="Martin L.J."/>
            <person name="Caron M.G."/>
            <person name="Snyder S.H."/>
            <person name="Lefkowitz R.J."/>
        </authorList>
    </citation>
    <scope>NUCLEOTIDE SEQUENCE [MRNA]</scope>
    <scope>SUBCELLULAR LOCATION</scope>
    <scope>TISSUE SPECIFICITY</scope>
    <scope>CATALYTIC ACTIVITY</scope>
    <source>
        <tissue>Brain</tissue>
    </source>
</reference>
<reference key="2">
    <citation type="journal article" date="1998" name="Proc. Natl. Acad. Sci. U.S.A.">
        <title>Beta2-adrenergic receptor regulation by GIT1, a G protein-coupled receptor kinase-associated ADP ribosylation factor GTPase-activating protein.</title>
        <authorList>
            <person name="Premont R.T."/>
            <person name="Claing A."/>
            <person name="Vitale N."/>
            <person name="Freeman J.L.R."/>
            <person name="Pitcher J.A."/>
            <person name="Patton W.A."/>
            <person name="Moss J."/>
            <person name="Vaughan M."/>
            <person name="Lefkowitz R.J."/>
        </authorList>
    </citation>
    <scope>INTERACTION WITH GIT1</scope>
</reference>
<keyword id="KW-0067">ATP-binding</keyword>
<keyword id="KW-0966">Cell projection</keyword>
<keyword id="KW-0418">Kinase</keyword>
<keyword id="KW-0547">Nucleotide-binding</keyword>
<keyword id="KW-1185">Reference proteome</keyword>
<keyword id="KW-0723">Serine/threonine-protein kinase</keyword>
<keyword id="KW-0770">Synapse</keyword>
<keyword id="KW-0808">Transferase</keyword>
<keyword id="KW-0832">Ubl conjugation</keyword>
<feature type="chain" id="PRO_0000085633" description="G protein-coupled receptor kinase 3">
    <location>
        <begin position="1"/>
        <end position="688"/>
    </location>
</feature>
<feature type="domain" description="RGS" evidence="4">
    <location>
        <begin position="54"/>
        <end position="175"/>
    </location>
</feature>
<feature type="domain" description="Protein kinase" evidence="3">
    <location>
        <begin position="191"/>
        <end position="453"/>
    </location>
</feature>
<feature type="domain" description="AGC-kinase C-terminal" evidence="5">
    <location>
        <begin position="454"/>
        <end position="521"/>
    </location>
</feature>
<feature type="domain" description="PH" evidence="2">
    <location>
        <begin position="558"/>
        <end position="652"/>
    </location>
</feature>
<feature type="region of interest" description="N-terminal">
    <location>
        <begin position="1"/>
        <end position="190"/>
    </location>
</feature>
<feature type="active site" description="Proton acceptor" evidence="3 6">
    <location>
        <position position="317"/>
    </location>
</feature>
<feature type="binding site" evidence="3">
    <location>
        <begin position="197"/>
        <end position="205"/>
    </location>
    <ligand>
        <name>ATP</name>
        <dbReference type="ChEBI" id="CHEBI:30616"/>
    </ligand>
</feature>
<feature type="binding site" evidence="3">
    <location>
        <position position="220"/>
    </location>
    <ligand>
        <name>ATP</name>
        <dbReference type="ChEBI" id="CHEBI:30616"/>
    </ligand>
</feature>
<name>ARBK2_RAT</name>
<organism>
    <name type="scientific">Rattus norvegicus</name>
    <name type="common">Rat</name>
    <dbReference type="NCBI Taxonomy" id="10116"/>
    <lineage>
        <taxon>Eukaryota</taxon>
        <taxon>Metazoa</taxon>
        <taxon>Chordata</taxon>
        <taxon>Craniata</taxon>
        <taxon>Vertebrata</taxon>
        <taxon>Euteleostomi</taxon>
        <taxon>Mammalia</taxon>
        <taxon>Eutheria</taxon>
        <taxon>Euarchontoglires</taxon>
        <taxon>Glires</taxon>
        <taxon>Rodentia</taxon>
        <taxon>Myomorpha</taxon>
        <taxon>Muroidea</taxon>
        <taxon>Muridae</taxon>
        <taxon>Murinae</taxon>
        <taxon>Rattus</taxon>
    </lineage>
</organism>
<dbReference type="EC" id="2.7.11.15" evidence="7"/>
<dbReference type="EMBL" id="M87855">
    <property type="protein sequence ID" value="AAA40803.1"/>
    <property type="molecule type" value="mRNA"/>
</dbReference>
<dbReference type="PIR" id="I73628">
    <property type="entry name" value="I73628"/>
</dbReference>
<dbReference type="RefSeq" id="NP_037029.1">
    <property type="nucleotide sequence ID" value="NM_012897.2"/>
</dbReference>
<dbReference type="SMR" id="P26819"/>
<dbReference type="FunCoup" id="P26819">
    <property type="interactions" value="2687"/>
</dbReference>
<dbReference type="STRING" id="10116.ENSRNOP00000075107"/>
<dbReference type="PhosphoSitePlus" id="P26819"/>
<dbReference type="jPOST" id="P26819"/>
<dbReference type="DNASU" id="25372"/>
<dbReference type="GeneID" id="25372"/>
<dbReference type="KEGG" id="rno:25372"/>
<dbReference type="AGR" id="RGD:2063"/>
<dbReference type="CTD" id="157"/>
<dbReference type="RGD" id="2063">
    <property type="gene designation" value="Grk3"/>
</dbReference>
<dbReference type="InParanoid" id="P26819"/>
<dbReference type="PhylomeDB" id="P26819"/>
<dbReference type="BRENDA" id="2.7.11.15">
    <property type="organism ID" value="5301"/>
</dbReference>
<dbReference type="Reactome" id="R-RNO-418555">
    <property type="pathway name" value="G alpha (s) signalling events"/>
</dbReference>
<dbReference type="Reactome" id="R-RNO-8856825">
    <property type="pathway name" value="Cargo recognition for clathrin-mediated endocytosis"/>
</dbReference>
<dbReference type="PRO" id="PR:P26819"/>
<dbReference type="Proteomes" id="UP000002494">
    <property type="component" value="Unplaced"/>
</dbReference>
<dbReference type="GO" id="GO:0030424">
    <property type="term" value="C:axon"/>
    <property type="evidence" value="ECO:0000314"/>
    <property type="project" value="RGD"/>
</dbReference>
<dbReference type="GO" id="GO:0044292">
    <property type="term" value="C:dendrite terminus"/>
    <property type="evidence" value="ECO:0000314"/>
    <property type="project" value="RGD"/>
</dbReference>
<dbReference type="GO" id="GO:0043198">
    <property type="term" value="C:dendritic shaft"/>
    <property type="evidence" value="ECO:0000314"/>
    <property type="project" value="RGD"/>
</dbReference>
<dbReference type="GO" id="GO:0043197">
    <property type="term" value="C:dendritic spine"/>
    <property type="evidence" value="ECO:0000314"/>
    <property type="project" value="RGD"/>
</dbReference>
<dbReference type="GO" id="GO:0098978">
    <property type="term" value="C:glutamatergic synapse"/>
    <property type="evidence" value="ECO:0000314"/>
    <property type="project" value="SynGO"/>
</dbReference>
<dbReference type="GO" id="GO:0048471">
    <property type="term" value="C:perinuclear region of cytoplasm"/>
    <property type="evidence" value="ECO:0000314"/>
    <property type="project" value="RGD"/>
</dbReference>
<dbReference type="GO" id="GO:0014069">
    <property type="term" value="C:postsynaptic density"/>
    <property type="evidence" value="ECO:0000314"/>
    <property type="project" value="SynGO"/>
</dbReference>
<dbReference type="GO" id="GO:0098793">
    <property type="term" value="C:presynapse"/>
    <property type="evidence" value="ECO:0000314"/>
    <property type="project" value="SynGO"/>
</dbReference>
<dbReference type="GO" id="GO:0097225">
    <property type="term" value="C:sperm midpiece"/>
    <property type="evidence" value="ECO:0000314"/>
    <property type="project" value="RGD"/>
</dbReference>
<dbReference type="GO" id="GO:0030018">
    <property type="term" value="C:Z disc"/>
    <property type="evidence" value="ECO:0000314"/>
    <property type="project" value="RGD"/>
</dbReference>
<dbReference type="GO" id="GO:0005524">
    <property type="term" value="F:ATP binding"/>
    <property type="evidence" value="ECO:0007669"/>
    <property type="project" value="UniProtKB-KW"/>
</dbReference>
<dbReference type="GO" id="GO:0047696">
    <property type="term" value="F:beta-adrenergic receptor kinase activity"/>
    <property type="evidence" value="ECO:0000314"/>
    <property type="project" value="RGD"/>
</dbReference>
<dbReference type="GO" id="GO:0031748">
    <property type="term" value="F:D1 dopamine receptor binding"/>
    <property type="evidence" value="ECO:0000353"/>
    <property type="project" value="RGD"/>
</dbReference>
<dbReference type="GO" id="GO:0001664">
    <property type="term" value="F:G protein-coupled receptor binding"/>
    <property type="evidence" value="ECO:0000318"/>
    <property type="project" value="GO_Central"/>
</dbReference>
<dbReference type="GO" id="GO:0004703">
    <property type="term" value="F:G protein-coupled receptor kinase activity"/>
    <property type="evidence" value="ECO:0000314"/>
    <property type="project" value="RGD"/>
</dbReference>
<dbReference type="GO" id="GO:0004674">
    <property type="term" value="F:protein serine/threonine kinase activity"/>
    <property type="evidence" value="ECO:0000304"/>
    <property type="project" value="RGD"/>
</dbReference>
<dbReference type="GO" id="GO:0002029">
    <property type="term" value="P:desensitization of G protein-coupled receptor signaling pathway"/>
    <property type="evidence" value="ECO:0000314"/>
    <property type="project" value="RGD"/>
</dbReference>
<dbReference type="GO" id="GO:0007186">
    <property type="term" value="P:G protein-coupled receptor signaling pathway"/>
    <property type="evidence" value="ECO:0000270"/>
    <property type="project" value="RGD"/>
</dbReference>
<dbReference type="GO" id="GO:0043647">
    <property type="term" value="P:inositol phosphate metabolic process"/>
    <property type="evidence" value="ECO:0000315"/>
    <property type="project" value="RGD"/>
</dbReference>
<dbReference type="GO" id="GO:0006886">
    <property type="term" value="P:intracellular protein transport"/>
    <property type="evidence" value="ECO:0000315"/>
    <property type="project" value="RGD"/>
</dbReference>
<dbReference type="GO" id="GO:0045744">
    <property type="term" value="P:negative regulation of G protein-coupled receptor signaling pathway"/>
    <property type="evidence" value="ECO:0000305"/>
    <property type="project" value="RGD"/>
</dbReference>
<dbReference type="GO" id="GO:0031623">
    <property type="term" value="P:receptor internalization"/>
    <property type="evidence" value="ECO:0000266"/>
    <property type="project" value="RGD"/>
</dbReference>
<dbReference type="GO" id="GO:0046154">
    <property type="term" value="P:rhodopsin metabolic process"/>
    <property type="evidence" value="ECO:0000315"/>
    <property type="project" value="RGD"/>
</dbReference>
<dbReference type="CDD" id="cd01240">
    <property type="entry name" value="PH_GRK2_subgroup"/>
    <property type="match status" value="1"/>
</dbReference>
<dbReference type="CDD" id="cd08747">
    <property type="entry name" value="RGS_GRK2_GRK3"/>
    <property type="match status" value="1"/>
</dbReference>
<dbReference type="FunFam" id="1.10.287.1270:FF:000001">
    <property type="entry name" value="G protein-coupled receptor kinase"/>
    <property type="match status" value="1"/>
</dbReference>
<dbReference type="FunFam" id="1.10.510.10:FF:000118">
    <property type="entry name" value="G protein-coupled receptor kinase"/>
    <property type="match status" value="1"/>
</dbReference>
<dbReference type="FunFam" id="2.30.29.30:FF:000084">
    <property type="entry name" value="G protein-coupled receptor kinase"/>
    <property type="match status" value="1"/>
</dbReference>
<dbReference type="FunFam" id="3.30.200.20:FF:000068">
    <property type="entry name" value="G protein-coupled receptor kinase"/>
    <property type="match status" value="1"/>
</dbReference>
<dbReference type="Gene3D" id="1.10.287.1270">
    <property type="match status" value="3"/>
</dbReference>
<dbReference type="Gene3D" id="3.30.200.20">
    <property type="entry name" value="Phosphorylase Kinase, domain 1"/>
    <property type="match status" value="1"/>
</dbReference>
<dbReference type="Gene3D" id="2.30.29.30">
    <property type="entry name" value="Pleckstrin-homology domain (PH domain)/Phosphotyrosine-binding domain (PTB)"/>
    <property type="match status" value="1"/>
</dbReference>
<dbReference type="Gene3D" id="1.10.510.10">
    <property type="entry name" value="Transferase(Phosphotransferase) domain 1"/>
    <property type="match status" value="1"/>
</dbReference>
<dbReference type="InterPro" id="IPR000961">
    <property type="entry name" value="AGC-kinase_C"/>
</dbReference>
<dbReference type="InterPro" id="IPR000239">
    <property type="entry name" value="GPCR_kinase"/>
</dbReference>
<dbReference type="InterPro" id="IPR011009">
    <property type="entry name" value="Kinase-like_dom_sf"/>
</dbReference>
<dbReference type="InterPro" id="IPR011993">
    <property type="entry name" value="PH-like_dom_sf"/>
</dbReference>
<dbReference type="InterPro" id="IPR001849">
    <property type="entry name" value="PH_domain"/>
</dbReference>
<dbReference type="InterPro" id="IPR000719">
    <property type="entry name" value="Prot_kinase_dom"/>
</dbReference>
<dbReference type="InterPro" id="IPR017441">
    <property type="entry name" value="Protein_kinase_ATP_BS"/>
</dbReference>
<dbReference type="InterPro" id="IPR016137">
    <property type="entry name" value="RGS"/>
</dbReference>
<dbReference type="InterPro" id="IPR036305">
    <property type="entry name" value="RGS_sf"/>
</dbReference>
<dbReference type="InterPro" id="IPR008271">
    <property type="entry name" value="Ser/Thr_kinase_AS"/>
</dbReference>
<dbReference type="PANTHER" id="PTHR24355:SF17">
    <property type="entry name" value="BETA-ADRENERGIC RECEPTOR KINASE 2"/>
    <property type="match status" value="1"/>
</dbReference>
<dbReference type="PANTHER" id="PTHR24355">
    <property type="entry name" value="G PROTEIN-COUPLED RECEPTOR KINASE/RIBOSOMAL PROTEIN S6 KINASE"/>
    <property type="match status" value="1"/>
</dbReference>
<dbReference type="Pfam" id="PF00169">
    <property type="entry name" value="PH"/>
    <property type="match status" value="1"/>
</dbReference>
<dbReference type="Pfam" id="PF00069">
    <property type="entry name" value="Pkinase"/>
    <property type="match status" value="1"/>
</dbReference>
<dbReference type="Pfam" id="PF00615">
    <property type="entry name" value="RGS"/>
    <property type="match status" value="1"/>
</dbReference>
<dbReference type="PRINTS" id="PR00717">
    <property type="entry name" value="GPCRKINASE"/>
</dbReference>
<dbReference type="SMART" id="SM00233">
    <property type="entry name" value="PH"/>
    <property type="match status" value="1"/>
</dbReference>
<dbReference type="SMART" id="SM00315">
    <property type="entry name" value="RGS"/>
    <property type="match status" value="1"/>
</dbReference>
<dbReference type="SMART" id="SM00133">
    <property type="entry name" value="S_TK_X"/>
    <property type="match status" value="1"/>
</dbReference>
<dbReference type="SMART" id="SM00220">
    <property type="entry name" value="S_TKc"/>
    <property type="match status" value="1"/>
</dbReference>
<dbReference type="SUPFAM" id="SSF50729">
    <property type="entry name" value="PH domain-like"/>
    <property type="match status" value="1"/>
</dbReference>
<dbReference type="SUPFAM" id="SSF56112">
    <property type="entry name" value="Protein kinase-like (PK-like)"/>
    <property type="match status" value="1"/>
</dbReference>
<dbReference type="SUPFAM" id="SSF48097">
    <property type="entry name" value="Regulator of G-protein signaling, RGS"/>
    <property type="match status" value="1"/>
</dbReference>
<dbReference type="PROSITE" id="PS51285">
    <property type="entry name" value="AGC_KINASE_CTER"/>
    <property type="match status" value="1"/>
</dbReference>
<dbReference type="PROSITE" id="PS50003">
    <property type="entry name" value="PH_DOMAIN"/>
    <property type="match status" value="1"/>
</dbReference>
<dbReference type="PROSITE" id="PS00107">
    <property type="entry name" value="PROTEIN_KINASE_ATP"/>
    <property type="match status" value="1"/>
</dbReference>
<dbReference type="PROSITE" id="PS50011">
    <property type="entry name" value="PROTEIN_KINASE_DOM"/>
    <property type="match status" value="1"/>
</dbReference>
<dbReference type="PROSITE" id="PS00108">
    <property type="entry name" value="PROTEIN_KINASE_ST"/>
    <property type="match status" value="1"/>
</dbReference>
<dbReference type="PROSITE" id="PS50132">
    <property type="entry name" value="RGS"/>
    <property type="match status" value="1"/>
</dbReference>
<protein>
    <recommendedName>
        <fullName evidence="11">G protein-coupled receptor kinase 3</fullName>
        <ecNumber evidence="7">2.7.11.15</ecNumber>
    </recommendedName>
    <alternativeName>
        <fullName evidence="9">Beta-adrenergic receptor kinase 2</fullName>
        <shortName evidence="9">Beta-ARK-2</shortName>
    </alternativeName>
</protein>
<gene>
    <name evidence="11" type="primary">Grk3</name>
    <name evidence="11" type="synonym">Adrbk2</name>
</gene>
<comment type="function">
    <text evidence="7">Specifically phosphorylates the agonist-occupied form of the beta-adrenergic and closely related receptors.</text>
</comment>
<comment type="catalytic activity">
    <reaction evidence="7">
        <text>[beta-adrenergic receptor] + ATP = [beta-adrenergic receptor]-phosphate + ADP + H(+)</text>
        <dbReference type="Rhea" id="RHEA:19429"/>
        <dbReference type="Rhea" id="RHEA-COMP:11222"/>
        <dbReference type="Rhea" id="RHEA-COMP:11223"/>
        <dbReference type="ChEBI" id="CHEBI:15378"/>
        <dbReference type="ChEBI" id="CHEBI:30616"/>
        <dbReference type="ChEBI" id="CHEBI:43176"/>
        <dbReference type="ChEBI" id="CHEBI:68546"/>
        <dbReference type="ChEBI" id="CHEBI:456216"/>
        <dbReference type="EC" id="2.7.11.15"/>
    </reaction>
    <physiologicalReaction direction="left-to-right" evidence="7">
        <dbReference type="Rhea" id="RHEA:19430"/>
    </physiologicalReaction>
</comment>
<comment type="subunit">
    <text evidence="8">Interacts with GIT1.</text>
</comment>
<comment type="subcellular location">
    <subcellularLocation>
        <location evidence="7">Postsynapse</location>
    </subcellularLocation>
    <subcellularLocation>
        <location evidence="7">Presynapse</location>
    </subcellularLocation>
</comment>
<comment type="tissue specificity">
    <text evidence="7">Expressed in brain cortex, hippocampus, striatum, hypothalamus, cerebellum and brainstem (at protein level).</text>
</comment>
<comment type="PTM">
    <text evidence="1">Ubiquitinated.</text>
</comment>
<comment type="similarity">
    <text evidence="10">Belongs to the protein kinase superfamily. AGC Ser/Thr protein kinase family. GPRK subfamily.</text>
</comment>
<evidence type="ECO:0000250" key="1">
    <source>
        <dbReference type="UniProtKB" id="P35626"/>
    </source>
</evidence>
<evidence type="ECO:0000255" key="2">
    <source>
        <dbReference type="PROSITE-ProRule" id="PRU00145"/>
    </source>
</evidence>
<evidence type="ECO:0000255" key="3">
    <source>
        <dbReference type="PROSITE-ProRule" id="PRU00159"/>
    </source>
</evidence>
<evidence type="ECO:0000255" key="4">
    <source>
        <dbReference type="PROSITE-ProRule" id="PRU00171"/>
    </source>
</evidence>
<evidence type="ECO:0000255" key="5">
    <source>
        <dbReference type="PROSITE-ProRule" id="PRU00618"/>
    </source>
</evidence>
<evidence type="ECO:0000255" key="6">
    <source>
        <dbReference type="PROSITE-ProRule" id="PRU10027"/>
    </source>
</evidence>
<evidence type="ECO:0000269" key="7">
    <source>
    </source>
</evidence>
<evidence type="ECO:0000269" key="8">
    <source>
    </source>
</evidence>
<evidence type="ECO:0000303" key="9">
    <source>
    </source>
</evidence>
<evidence type="ECO:0000305" key="10"/>
<evidence type="ECO:0000312" key="11">
    <source>
        <dbReference type="RGD" id="2063"/>
    </source>
</evidence>
<accession>P26819</accession>
<proteinExistence type="evidence at protein level"/>
<sequence length="688" mass="79887">MADLEAVLADVSYLMAMEKSKATPAARASKKVVLPEPSIRSVMQRYLAERNEITFDKIFNQKIGFLLFKDFCLNEIGEAVPQVKFYEEIKEYEKLDNEEDRLHRSRQMYDAYIMRELLSSTHQFSKQAVEHVQSHLSKKQVTPTLFQPYIEEICESLRGDIFQKFMESEKFTRFCQWKNVELNIHLSMNDFSVHRIIGRGGFGEVYGCRKADTGKMYAMKCLDKKRVKMKQGETLALNERIMLSLVSTGDCPFIVCMTYAFHTPDKLCFILDLMNGGDMHYHLSQHGVFSEKEMRFYASEIILGLEHMHTCFVVYRDLKPANILLDEYGHVRISDLGLACDFSKKKPHASVGTHGYMAPEVLQKGTCYDSSADWFSLGCMLFKLLRGHSPFRQHKTKDKHEIDRMTLTVNVQLPDAFSPELRSLLEGLLQRDVSQRLGCYGGGARELKEHIFFKGIDWQYVYLRKYPPPLIPPRGEVNAADAFDIGSFDEEDTKGIKLLDCDQDLYKNFPLMISERWQQEVVETIYDAVNAETDKIEARKKAKNKQLCQEEDYAMGKDCIMHGYMLKLGNPFLTQWQRRYFYLFPNRLEWRGEGESRQNLLTMEQIMSVEETQIKDRKCILLRVKGGKQFVLQCESDPEFAQWLKELTCTFNEAQRLLRRAPKFLNKPRAAILEFSKPPLCHRNSSGL</sequence>